<proteinExistence type="evidence at transcript level"/>
<reference key="1">
    <citation type="journal article" date="2005" name="Nature">
        <title>The map-based sequence of the rice genome.</title>
        <authorList>
            <consortium name="International rice genome sequencing project (IRGSP)"/>
        </authorList>
    </citation>
    <scope>NUCLEOTIDE SEQUENCE [LARGE SCALE GENOMIC DNA]</scope>
    <source>
        <strain>cv. Nipponbare</strain>
    </source>
</reference>
<reference key="2">
    <citation type="journal article" date="2008" name="Nucleic Acids Res.">
        <title>The rice annotation project database (RAP-DB): 2008 update.</title>
        <authorList>
            <consortium name="The rice annotation project (RAP)"/>
        </authorList>
    </citation>
    <scope>GENOME REANNOTATION</scope>
    <source>
        <strain>cv. Nipponbare</strain>
    </source>
</reference>
<reference key="3">
    <citation type="journal article" date="2013" name="Rice">
        <title>Improvement of the Oryza sativa Nipponbare reference genome using next generation sequence and optical map data.</title>
        <authorList>
            <person name="Kawahara Y."/>
            <person name="de la Bastide M."/>
            <person name="Hamilton J.P."/>
            <person name="Kanamori H."/>
            <person name="McCombie W.R."/>
            <person name="Ouyang S."/>
            <person name="Schwartz D.C."/>
            <person name="Tanaka T."/>
            <person name="Wu J."/>
            <person name="Zhou S."/>
            <person name="Childs K.L."/>
            <person name="Davidson R.M."/>
            <person name="Lin H."/>
            <person name="Quesada-Ocampo L."/>
            <person name="Vaillancourt B."/>
            <person name="Sakai H."/>
            <person name="Lee S.S."/>
            <person name="Kim J."/>
            <person name="Numa H."/>
            <person name="Itoh T."/>
            <person name="Buell C.R."/>
            <person name="Matsumoto T."/>
        </authorList>
    </citation>
    <scope>GENOME REANNOTATION</scope>
    <source>
        <strain>cv. Nipponbare</strain>
    </source>
</reference>
<reference key="4">
    <citation type="journal article" date="2003" name="Science">
        <title>Collection, mapping, and annotation of over 28,000 cDNA clones from japonica rice.</title>
        <authorList>
            <consortium name="The rice full-length cDNA consortium"/>
        </authorList>
    </citation>
    <scope>NUCLEOTIDE SEQUENCE [LARGE SCALE MRNA] OF 1-539</scope>
    <source>
        <strain>cv. Nipponbare</strain>
    </source>
</reference>
<dbReference type="EMBL" id="AP004117">
    <property type="protein sequence ID" value="BAD27742.1"/>
    <property type="molecule type" value="Genomic_DNA"/>
</dbReference>
<dbReference type="EMBL" id="AP005614">
    <property type="protein sequence ID" value="BAD19939.1"/>
    <property type="molecule type" value="Genomic_DNA"/>
</dbReference>
<dbReference type="EMBL" id="AP008208">
    <property type="protein sequence ID" value="BAF08336.2"/>
    <property type="status" value="ALT_SEQ"/>
    <property type="molecule type" value="Genomic_DNA"/>
</dbReference>
<dbReference type="EMBL" id="AP014958">
    <property type="status" value="NOT_ANNOTATED_CDS"/>
    <property type="molecule type" value="Genomic_DNA"/>
</dbReference>
<dbReference type="EMBL" id="AK100808">
    <property type="status" value="NOT_ANNOTATED_CDS"/>
    <property type="molecule type" value="mRNA"/>
</dbReference>
<dbReference type="RefSeq" id="XP_015623358.1">
    <property type="nucleotide sequence ID" value="XM_015767872.1"/>
</dbReference>
<dbReference type="SMR" id="Q6K3T2"/>
<dbReference type="FunCoup" id="Q6K3T2">
    <property type="interactions" value="998"/>
</dbReference>
<dbReference type="STRING" id="39947.Q6K3T2"/>
<dbReference type="PaxDb" id="39947-Q6K3T2"/>
<dbReference type="EnsemblPlants" id="Os02t0245800-01">
    <property type="protein sequence ID" value="Os02t0245800-01"/>
    <property type="gene ID" value="Os02g0245800"/>
</dbReference>
<dbReference type="Gramene" id="Os02t0245800-01">
    <property type="protein sequence ID" value="Os02t0245800-01"/>
    <property type="gene ID" value="Os02g0245800"/>
</dbReference>
<dbReference type="KEGG" id="dosa:Os02g0245800"/>
<dbReference type="eggNOG" id="KOG0498">
    <property type="taxonomic scope" value="Eukaryota"/>
</dbReference>
<dbReference type="HOGENOM" id="CLU_005746_8_2_1"/>
<dbReference type="InParanoid" id="Q6K3T2"/>
<dbReference type="OrthoDB" id="426293at2759"/>
<dbReference type="PlantReactome" id="R-OSA-3899351">
    <property type="pathway name" value="Abscisic acid (ABA) mediated signaling"/>
</dbReference>
<dbReference type="Proteomes" id="UP000000763">
    <property type="component" value="Chromosome 2"/>
</dbReference>
<dbReference type="Proteomes" id="UP000059680">
    <property type="component" value="Chromosome 2"/>
</dbReference>
<dbReference type="GO" id="GO:0034702">
    <property type="term" value="C:monoatomic ion channel complex"/>
    <property type="evidence" value="ECO:0007669"/>
    <property type="project" value="UniProtKB-KW"/>
</dbReference>
<dbReference type="GO" id="GO:0005249">
    <property type="term" value="F:voltage-gated potassium channel activity"/>
    <property type="evidence" value="ECO:0007669"/>
    <property type="project" value="InterPro"/>
</dbReference>
<dbReference type="CDD" id="cd00038">
    <property type="entry name" value="CAP_ED"/>
    <property type="match status" value="1"/>
</dbReference>
<dbReference type="FunFam" id="2.60.120.10:FF:000074">
    <property type="entry name" value="Potassium channel KAT2"/>
    <property type="match status" value="1"/>
</dbReference>
<dbReference type="FunFam" id="1.10.287.70:FF:000123">
    <property type="entry name" value="Potassium channel KAT3"/>
    <property type="match status" value="1"/>
</dbReference>
<dbReference type="Gene3D" id="1.10.287.70">
    <property type="match status" value="1"/>
</dbReference>
<dbReference type="Gene3D" id="1.10.287.630">
    <property type="entry name" value="Helix hairpin bin"/>
    <property type="match status" value="1"/>
</dbReference>
<dbReference type="Gene3D" id="2.60.120.10">
    <property type="entry name" value="Jelly Rolls"/>
    <property type="match status" value="1"/>
</dbReference>
<dbReference type="InterPro" id="IPR000595">
    <property type="entry name" value="cNMP-bd_dom"/>
</dbReference>
<dbReference type="InterPro" id="IPR018490">
    <property type="entry name" value="cNMP-bd_dom_sf"/>
</dbReference>
<dbReference type="InterPro" id="IPR005821">
    <property type="entry name" value="Ion_trans_dom"/>
</dbReference>
<dbReference type="InterPro" id="IPR003938">
    <property type="entry name" value="K_chnl_volt-dep_EAG/ELK/ERG"/>
</dbReference>
<dbReference type="InterPro" id="IPR045319">
    <property type="entry name" value="KAT/AKT"/>
</dbReference>
<dbReference type="InterPro" id="IPR021789">
    <property type="entry name" value="KHA_dom"/>
</dbReference>
<dbReference type="InterPro" id="IPR014710">
    <property type="entry name" value="RmlC-like_jellyroll"/>
</dbReference>
<dbReference type="PANTHER" id="PTHR45743">
    <property type="entry name" value="POTASSIUM CHANNEL AKT1"/>
    <property type="match status" value="1"/>
</dbReference>
<dbReference type="PANTHER" id="PTHR45743:SF6">
    <property type="entry name" value="POTASSIUM CHANNEL KAT2"/>
    <property type="match status" value="1"/>
</dbReference>
<dbReference type="Pfam" id="PF00027">
    <property type="entry name" value="cNMP_binding"/>
    <property type="match status" value="1"/>
</dbReference>
<dbReference type="Pfam" id="PF00520">
    <property type="entry name" value="Ion_trans"/>
    <property type="match status" value="1"/>
</dbReference>
<dbReference type="Pfam" id="PF11834">
    <property type="entry name" value="KHA"/>
    <property type="match status" value="1"/>
</dbReference>
<dbReference type="PRINTS" id="PR01463">
    <property type="entry name" value="EAGCHANLFMLY"/>
</dbReference>
<dbReference type="SMART" id="SM00100">
    <property type="entry name" value="cNMP"/>
    <property type="match status" value="1"/>
</dbReference>
<dbReference type="SUPFAM" id="SSF51206">
    <property type="entry name" value="cAMP-binding domain-like"/>
    <property type="match status" value="1"/>
</dbReference>
<dbReference type="SUPFAM" id="SSF81324">
    <property type="entry name" value="Voltage-gated potassium channels"/>
    <property type="match status" value="1"/>
</dbReference>
<dbReference type="PROSITE" id="PS50042">
    <property type="entry name" value="CNMP_BINDING_3"/>
    <property type="match status" value="1"/>
</dbReference>
<dbReference type="PROSITE" id="PS51490">
    <property type="entry name" value="KHA"/>
    <property type="match status" value="1"/>
</dbReference>
<protein>
    <recommendedName>
        <fullName>Potassium channel KAT1</fullName>
    </recommendedName>
</protein>
<sequence>MTQAHSKSCFHQFWDGLQIKRSSDSFTVELLPSLGATINHSNKLQKFIISPYDPRYRSWELFLIVLVVYSAWICPFELAFLRDLPSKLLLVENIVDIFFAIDIVLTFFVAYVDSKTHLLVDDRKRIAMRYLSTWFIFDVCSTAPFQPIILLFTHKGNDIAFKVLNLLRLWRLHRVSSLFARLEKDIRFNYFWTRCSKLISVTLFAVHCAGCFNYMIADRYPNPEKTWIGAVMSTFRSESLWTRYITALYWSITTLTTTGYGDLHAENPTEMLFDIVYMMFNLGLTAYLIGNMTNLVVHGTSRTRKFRDSIQAASEFAARNQLPENIKQQVLSHFCLQFKTEGLNQQVMLDCLPKGIRSSIAYSLFFPIIRQAYLFNGVSGNFIAELVMEVQAEYFPPKEDIILQNEGEADVYIVVSGAVNIITTIHGNEQVYEKIAEGEMFGEVGSLCNIPQPFTCRTAELSQLLRISKTRLREIIEENREDSNILMNNLVQKLKLRESLPDMNQPDRRFLSKYELFHVPREAWLLKKSQLHYTEHTSRDSSNNTPVFGGDRYSRQLLGEATRSSASENENSSMTDKEENHDEVHTNCEIKKRTEEHCIQINSEDSSSTYSQRTMNATVQTGSPHKTEENITRRIPDEYYIKEANKRVTIHKYRHNSTVSAAQNGKLIKLPTSLEELFKIGSQKFQGFHPRKVVSRDYAEIDDVSVIRDGDHLFLLEM</sequence>
<accession>Q6K3T2</accession>
<accession>Q0E2F2</accession>
<comment type="function">
    <text evidence="1">Probable inward-rectifying potassium channel. Assuming opened or closed conformations in response to the voltage difference across the membrane, the channel is activated by hyperpolarization (By similarity).</text>
</comment>
<comment type="subcellular location">
    <subcellularLocation>
        <location evidence="5">Membrane</location>
        <topology evidence="5">Multi-pass membrane protein</topology>
    </subcellularLocation>
</comment>
<comment type="domain">
    <text evidence="1">The segment S4 is probably the voltage-sensor and is characterized by a series of positively charged amino acids. The pore-forming region H5 is enclosed by the transmembrane segments S5 and S6 in the Shaker-type (1P/6TM) and contains the GYGD signature motif which seems to be involved in potassium selectivity (By similarity).</text>
</comment>
<comment type="domain">
    <text evidence="1">The KHA domain (rich in hydrophobic and acidic residues) present in the C-terminal part is likely to be important for tetramerization.</text>
</comment>
<comment type="similarity">
    <text evidence="5">Belongs to the potassium channel family. Plant (TC 1.A.1.4) subfamily.</text>
</comment>
<comment type="sequence caution" evidence="5">
    <conflict type="erroneous gene model prediction">
        <sequence resource="EMBL-CDS" id="BAF08336"/>
    </conflict>
</comment>
<evidence type="ECO:0000250" key="1"/>
<evidence type="ECO:0000255" key="2"/>
<evidence type="ECO:0000255" key="3">
    <source>
        <dbReference type="PROSITE-ProRule" id="PRU00823"/>
    </source>
</evidence>
<evidence type="ECO:0000256" key="4">
    <source>
        <dbReference type="SAM" id="MobiDB-lite"/>
    </source>
</evidence>
<evidence type="ECO:0000305" key="5"/>
<gene>
    <name type="ordered locus">Os02g0245800</name>
    <name type="ordered locus">LOC_Os02g14840</name>
    <name type="ORF">OJ1134_F06.17</name>
    <name type="ORF">OSJNBa0090H18.7</name>
</gene>
<name>KAT1_ORYSJ</name>
<organism>
    <name type="scientific">Oryza sativa subsp. japonica</name>
    <name type="common">Rice</name>
    <dbReference type="NCBI Taxonomy" id="39947"/>
    <lineage>
        <taxon>Eukaryota</taxon>
        <taxon>Viridiplantae</taxon>
        <taxon>Streptophyta</taxon>
        <taxon>Embryophyta</taxon>
        <taxon>Tracheophyta</taxon>
        <taxon>Spermatophyta</taxon>
        <taxon>Magnoliopsida</taxon>
        <taxon>Liliopsida</taxon>
        <taxon>Poales</taxon>
        <taxon>Poaceae</taxon>
        <taxon>BOP clade</taxon>
        <taxon>Oryzoideae</taxon>
        <taxon>Oryzeae</taxon>
        <taxon>Oryzinae</taxon>
        <taxon>Oryza</taxon>
        <taxon>Oryza sativa</taxon>
    </lineage>
</organism>
<keyword id="KW-0407">Ion channel</keyword>
<keyword id="KW-0406">Ion transport</keyword>
<keyword id="KW-0472">Membrane</keyword>
<keyword id="KW-0630">Potassium</keyword>
<keyword id="KW-0631">Potassium channel</keyword>
<keyword id="KW-0633">Potassium transport</keyword>
<keyword id="KW-1185">Reference proteome</keyword>
<keyword id="KW-0812">Transmembrane</keyword>
<keyword id="KW-1133">Transmembrane helix</keyword>
<keyword id="KW-0813">Transport</keyword>
<keyword id="KW-0851">Voltage-gated channel</keyword>
<feature type="chain" id="PRO_0000410877" description="Potassium channel KAT1">
    <location>
        <begin position="1"/>
        <end position="718"/>
    </location>
</feature>
<feature type="topological domain" description="Cytoplasmic" evidence="2">
    <location>
        <begin position="1"/>
        <end position="60"/>
    </location>
</feature>
<feature type="transmembrane region" description="Helical; Name=Segment S1" evidence="2">
    <location>
        <begin position="61"/>
        <end position="81"/>
    </location>
</feature>
<feature type="topological domain" description="Extracellular" evidence="2">
    <location>
        <begin position="82"/>
        <end position="88"/>
    </location>
</feature>
<feature type="transmembrane region" description="Helical; Name=Segment S2" evidence="2">
    <location>
        <begin position="89"/>
        <end position="109"/>
    </location>
</feature>
<feature type="topological domain" description="Cytoplasmic" evidence="2">
    <location>
        <begin position="110"/>
        <end position="132"/>
    </location>
</feature>
<feature type="transmembrane region" description="Helical; Name=Segment S3" evidence="2">
    <location>
        <begin position="133"/>
        <end position="153"/>
    </location>
</feature>
<feature type="topological domain" description="Extracellular" evidence="2">
    <location>
        <begin position="154"/>
        <end position="162"/>
    </location>
</feature>
<feature type="transmembrane region" description="Helical; Voltage-sensor; Name=Segment S4" evidence="2">
    <location>
        <begin position="163"/>
        <end position="183"/>
    </location>
</feature>
<feature type="topological domain" description="Cytoplasmic" evidence="2">
    <location>
        <begin position="184"/>
        <end position="197"/>
    </location>
</feature>
<feature type="transmembrane region" description="Helical; Name=Segment S5" evidence="2">
    <location>
        <begin position="198"/>
        <end position="218"/>
    </location>
</feature>
<feature type="topological domain" description="Extracellular" evidence="2">
    <location>
        <begin position="219"/>
        <end position="245"/>
    </location>
</feature>
<feature type="intramembrane region" description="Pore-forming; Name=Segment H5" evidence="2">
    <location>
        <begin position="246"/>
        <end position="265"/>
    </location>
</feature>
<feature type="topological domain" description="Extracellular" evidence="2">
    <location>
        <begin position="266"/>
        <end position="269"/>
    </location>
</feature>
<feature type="transmembrane region" description="Helical; Name=Segment S6" evidence="2">
    <location>
        <begin position="270"/>
        <end position="290"/>
    </location>
</feature>
<feature type="topological domain" description="Cytoplasmic" evidence="2">
    <location>
        <begin position="291"/>
        <end position="718"/>
    </location>
</feature>
<feature type="domain" description="KHA" evidence="3">
    <location>
        <begin position="647"/>
        <end position="718"/>
    </location>
</feature>
<feature type="region of interest" description="Disordered" evidence="4">
    <location>
        <begin position="560"/>
        <end position="584"/>
    </location>
</feature>
<feature type="compositionally biased region" description="Polar residues" evidence="4">
    <location>
        <begin position="562"/>
        <end position="574"/>
    </location>
</feature>
<feature type="compositionally biased region" description="Basic and acidic residues" evidence="4">
    <location>
        <begin position="575"/>
        <end position="584"/>
    </location>
</feature>
<feature type="binding site">
    <location>
        <begin position="374"/>
        <end position="493"/>
    </location>
    <ligand>
        <name>a nucleoside 3',5'-cyclic phosphate</name>
        <dbReference type="ChEBI" id="CHEBI:58464"/>
    </ligand>
</feature>